<gene>
    <name evidence="1" type="primary">kynU</name>
    <name type="ordered locus">BMASAVP1_A0651</name>
</gene>
<comment type="function">
    <text evidence="1">Catalyzes the cleavage of L-kynurenine (L-Kyn) and L-3-hydroxykynurenine (L-3OHKyn) into anthranilic acid (AA) and 3-hydroxyanthranilic acid (3-OHAA), respectively.</text>
</comment>
<comment type="catalytic activity">
    <reaction evidence="1">
        <text>L-kynurenine + H2O = anthranilate + L-alanine + H(+)</text>
        <dbReference type="Rhea" id="RHEA:16813"/>
        <dbReference type="ChEBI" id="CHEBI:15377"/>
        <dbReference type="ChEBI" id="CHEBI:15378"/>
        <dbReference type="ChEBI" id="CHEBI:16567"/>
        <dbReference type="ChEBI" id="CHEBI:57959"/>
        <dbReference type="ChEBI" id="CHEBI:57972"/>
        <dbReference type="EC" id="3.7.1.3"/>
    </reaction>
</comment>
<comment type="catalytic activity">
    <reaction evidence="1">
        <text>3-hydroxy-L-kynurenine + H2O = 3-hydroxyanthranilate + L-alanine + H(+)</text>
        <dbReference type="Rhea" id="RHEA:25143"/>
        <dbReference type="ChEBI" id="CHEBI:15377"/>
        <dbReference type="ChEBI" id="CHEBI:15378"/>
        <dbReference type="ChEBI" id="CHEBI:36559"/>
        <dbReference type="ChEBI" id="CHEBI:57972"/>
        <dbReference type="ChEBI" id="CHEBI:58125"/>
        <dbReference type="EC" id="3.7.1.3"/>
    </reaction>
</comment>
<comment type="cofactor">
    <cofactor evidence="1">
        <name>pyridoxal 5'-phosphate</name>
        <dbReference type="ChEBI" id="CHEBI:597326"/>
    </cofactor>
</comment>
<comment type="pathway">
    <text evidence="1">Amino-acid degradation; L-kynurenine degradation; L-alanine and anthranilate from L-kynurenine: step 1/1.</text>
</comment>
<comment type="pathway">
    <text evidence="1">Cofactor biosynthesis; NAD(+) biosynthesis; quinolinate from L-kynurenine: step 2/3.</text>
</comment>
<comment type="subunit">
    <text evidence="1">Homodimer.</text>
</comment>
<comment type="similarity">
    <text evidence="1">Belongs to the kynureninase family.</text>
</comment>
<accession>A1V194</accession>
<proteinExistence type="inferred from homology"/>
<name>KYNU_BURMS</name>
<evidence type="ECO:0000255" key="1">
    <source>
        <dbReference type="HAMAP-Rule" id="MF_01970"/>
    </source>
</evidence>
<sequence length="416" mass="45922">MKTREEALALDRDDPLAPLREQFALPAGVIYLDGNSLGAQPRAAAARAQQVIGAEWGEGLIRSWNTAGWFALPRRLGDRLAPLIGAADDEVAITDTISINLFKLLAAMLRHQARHAPKRRVIVSERSNFPTDLYIAQGLIAQLDRDYELRLIDDPADLPDALDDETAVAMITHVNYRTGYMHDMPSVTQTVRQAGALMLWDLAHSAGAVPVDLNGALADGAVGCTYKYLNGGPGSPAFVWVPKRHQRAFEQPLSGWWGHRAPFAMQPAFEPDPGIARFLCGTQPIVSMSMVECGLDVFAQTDMHAIRRKSLALTDAFVALVESRCAGQPLKLVTPRAHHQRGSQASFEHPHGYEVMQALIARGVIGDYREPRILRFGFTPLYTRFVDVWDAVETLRDILDTEAWRAPEFATRAAVT</sequence>
<protein>
    <recommendedName>
        <fullName evidence="1">Kynureninase</fullName>
        <ecNumber evidence="1">3.7.1.3</ecNumber>
    </recommendedName>
    <alternativeName>
        <fullName evidence="1">L-kynurenine hydrolase</fullName>
    </alternativeName>
</protein>
<feature type="chain" id="PRO_0000356998" description="Kynureninase">
    <location>
        <begin position="1"/>
        <end position="416"/>
    </location>
</feature>
<feature type="binding site" evidence="1">
    <location>
        <position position="97"/>
    </location>
    <ligand>
        <name>pyridoxal 5'-phosphate</name>
        <dbReference type="ChEBI" id="CHEBI:597326"/>
    </ligand>
</feature>
<feature type="binding site" evidence="1">
    <location>
        <position position="98"/>
    </location>
    <ligand>
        <name>pyridoxal 5'-phosphate</name>
        <dbReference type="ChEBI" id="CHEBI:597326"/>
    </ligand>
</feature>
<feature type="binding site" evidence="1">
    <location>
        <begin position="129"/>
        <end position="132"/>
    </location>
    <ligand>
        <name>pyridoxal 5'-phosphate</name>
        <dbReference type="ChEBI" id="CHEBI:597326"/>
    </ligand>
</feature>
<feature type="binding site" evidence="1">
    <location>
        <position position="172"/>
    </location>
    <ligand>
        <name>pyridoxal 5'-phosphate</name>
        <dbReference type="ChEBI" id="CHEBI:597326"/>
    </ligand>
</feature>
<feature type="binding site" evidence="1">
    <location>
        <position position="201"/>
    </location>
    <ligand>
        <name>pyridoxal 5'-phosphate</name>
        <dbReference type="ChEBI" id="CHEBI:597326"/>
    </ligand>
</feature>
<feature type="binding site" evidence="1">
    <location>
        <position position="204"/>
    </location>
    <ligand>
        <name>pyridoxal 5'-phosphate</name>
        <dbReference type="ChEBI" id="CHEBI:597326"/>
    </ligand>
</feature>
<feature type="binding site" evidence="1">
    <location>
        <position position="226"/>
    </location>
    <ligand>
        <name>pyridoxal 5'-phosphate</name>
        <dbReference type="ChEBI" id="CHEBI:597326"/>
    </ligand>
</feature>
<feature type="binding site" evidence="1">
    <location>
        <position position="256"/>
    </location>
    <ligand>
        <name>pyridoxal 5'-phosphate</name>
        <dbReference type="ChEBI" id="CHEBI:597326"/>
    </ligand>
</feature>
<feature type="binding site" evidence="1">
    <location>
        <position position="282"/>
    </location>
    <ligand>
        <name>pyridoxal 5'-phosphate</name>
        <dbReference type="ChEBI" id="CHEBI:597326"/>
    </ligand>
</feature>
<feature type="modified residue" description="N6-(pyridoxal phosphate)lysine" evidence="1">
    <location>
        <position position="227"/>
    </location>
</feature>
<organism>
    <name type="scientific">Burkholderia mallei (strain SAVP1)</name>
    <dbReference type="NCBI Taxonomy" id="320388"/>
    <lineage>
        <taxon>Bacteria</taxon>
        <taxon>Pseudomonadati</taxon>
        <taxon>Pseudomonadota</taxon>
        <taxon>Betaproteobacteria</taxon>
        <taxon>Burkholderiales</taxon>
        <taxon>Burkholderiaceae</taxon>
        <taxon>Burkholderia</taxon>
        <taxon>pseudomallei group</taxon>
    </lineage>
</organism>
<reference key="1">
    <citation type="journal article" date="2010" name="Genome Biol. Evol.">
        <title>Continuing evolution of Burkholderia mallei through genome reduction and large-scale rearrangements.</title>
        <authorList>
            <person name="Losada L."/>
            <person name="Ronning C.M."/>
            <person name="DeShazer D."/>
            <person name="Woods D."/>
            <person name="Fedorova N."/>
            <person name="Kim H.S."/>
            <person name="Shabalina S.A."/>
            <person name="Pearson T.R."/>
            <person name="Brinkac L."/>
            <person name="Tan P."/>
            <person name="Nandi T."/>
            <person name="Crabtree J."/>
            <person name="Badger J."/>
            <person name="Beckstrom-Sternberg S."/>
            <person name="Saqib M."/>
            <person name="Schutzer S.E."/>
            <person name="Keim P."/>
            <person name="Nierman W.C."/>
        </authorList>
    </citation>
    <scope>NUCLEOTIDE SEQUENCE [LARGE SCALE GENOMIC DNA]</scope>
    <source>
        <strain>SAVP1</strain>
    </source>
</reference>
<keyword id="KW-0378">Hydrolase</keyword>
<keyword id="KW-0662">Pyridine nucleotide biosynthesis</keyword>
<keyword id="KW-0663">Pyridoxal phosphate</keyword>
<dbReference type="EC" id="3.7.1.3" evidence="1"/>
<dbReference type="EMBL" id="CP000526">
    <property type="protein sequence ID" value="ABM52059.1"/>
    <property type="molecule type" value="Genomic_DNA"/>
</dbReference>
<dbReference type="RefSeq" id="WP_004189663.1">
    <property type="nucleotide sequence ID" value="NC_008785.1"/>
</dbReference>
<dbReference type="SMR" id="A1V194"/>
<dbReference type="GeneID" id="92978122"/>
<dbReference type="KEGG" id="bmv:BMASAVP1_A0651"/>
<dbReference type="HOGENOM" id="CLU_003433_4_1_4"/>
<dbReference type="UniPathway" id="UPA00253">
    <property type="reaction ID" value="UER00329"/>
</dbReference>
<dbReference type="UniPathway" id="UPA00334">
    <property type="reaction ID" value="UER00455"/>
</dbReference>
<dbReference type="GO" id="GO:0005737">
    <property type="term" value="C:cytoplasm"/>
    <property type="evidence" value="ECO:0007669"/>
    <property type="project" value="InterPro"/>
</dbReference>
<dbReference type="GO" id="GO:0030429">
    <property type="term" value="F:kynureninase activity"/>
    <property type="evidence" value="ECO:0007669"/>
    <property type="project" value="UniProtKB-UniRule"/>
</dbReference>
<dbReference type="GO" id="GO:0030170">
    <property type="term" value="F:pyridoxal phosphate binding"/>
    <property type="evidence" value="ECO:0007669"/>
    <property type="project" value="UniProtKB-UniRule"/>
</dbReference>
<dbReference type="GO" id="GO:0043420">
    <property type="term" value="P:anthranilate metabolic process"/>
    <property type="evidence" value="ECO:0007669"/>
    <property type="project" value="TreeGrafter"/>
</dbReference>
<dbReference type="GO" id="GO:0097053">
    <property type="term" value="P:L-kynurenine catabolic process"/>
    <property type="evidence" value="ECO:0007669"/>
    <property type="project" value="UniProtKB-UniRule"/>
</dbReference>
<dbReference type="GO" id="GO:0019441">
    <property type="term" value="P:L-tryptophan catabolic process to kynurenine"/>
    <property type="evidence" value="ECO:0007669"/>
    <property type="project" value="TreeGrafter"/>
</dbReference>
<dbReference type="GO" id="GO:0009435">
    <property type="term" value="P:NAD biosynthetic process"/>
    <property type="evidence" value="ECO:0007669"/>
    <property type="project" value="UniProtKB-UniPathway"/>
</dbReference>
<dbReference type="GO" id="GO:0019805">
    <property type="term" value="P:quinolinate biosynthetic process"/>
    <property type="evidence" value="ECO:0007669"/>
    <property type="project" value="UniProtKB-UniRule"/>
</dbReference>
<dbReference type="FunFam" id="3.40.640.10:FF:000107">
    <property type="entry name" value="Kynureninase"/>
    <property type="match status" value="1"/>
</dbReference>
<dbReference type="Gene3D" id="3.90.1150.10">
    <property type="entry name" value="Aspartate Aminotransferase, domain 1"/>
    <property type="match status" value="1"/>
</dbReference>
<dbReference type="Gene3D" id="3.40.640.10">
    <property type="entry name" value="Type I PLP-dependent aspartate aminotransferase-like (Major domain)"/>
    <property type="match status" value="1"/>
</dbReference>
<dbReference type="HAMAP" id="MF_01970">
    <property type="entry name" value="Kynureninase"/>
    <property type="match status" value="1"/>
</dbReference>
<dbReference type="InterPro" id="IPR010111">
    <property type="entry name" value="Kynureninase"/>
</dbReference>
<dbReference type="InterPro" id="IPR015424">
    <property type="entry name" value="PyrdxlP-dep_Trfase"/>
</dbReference>
<dbReference type="InterPro" id="IPR015421">
    <property type="entry name" value="PyrdxlP-dep_Trfase_major"/>
</dbReference>
<dbReference type="InterPro" id="IPR015422">
    <property type="entry name" value="PyrdxlP-dep_Trfase_small"/>
</dbReference>
<dbReference type="NCBIfam" id="TIGR01814">
    <property type="entry name" value="kynureninase"/>
    <property type="match status" value="1"/>
</dbReference>
<dbReference type="PANTHER" id="PTHR14084">
    <property type="entry name" value="KYNURENINASE"/>
    <property type="match status" value="1"/>
</dbReference>
<dbReference type="PANTHER" id="PTHR14084:SF0">
    <property type="entry name" value="KYNURENINASE"/>
    <property type="match status" value="1"/>
</dbReference>
<dbReference type="Pfam" id="PF22580">
    <property type="entry name" value="KYNU_C"/>
    <property type="match status" value="1"/>
</dbReference>
<dbReference type="PIRSF" id="PIRSF038800">
    <property type="entry name" value="KYNU"/>
    <property type="match status" value="1"/>
</dbReference>
<dbReference type="SUPFAM" id="SSF53383">
    <property type="entry name" value="PLP-dependent transferases"/>
    <property type="match status" value="1"/>
</dbReference>